<proteinExistence type="inferred from homology"/>
<gene>
    <name evidence="1" type="primary">engB</name>
    <name type="ordered locus">FTH_0889</name>
</gene>
<feature type="chain" id="PRO_0000266863" description="Probable GTP-binding protein EngB">
    <location>
        <begin position="1"/>
        <end position="197"/>
    </location>
</feature>
<feature type="domain" description="EngB-type G" evidence="1">
    <location>
        <begin position="22"/>
        <end position="197"/>
    </location>
</feature>
<feature type="binding site" evidence="1">
    <location>
        <begin position="30"/>
        <end position="37"/>
    </location>
    <ligand>
        <name>GTP</name>
        <dbReference type="ChEBI" id="CHEBI:37565"/>
    </ligand>
</feature>
<feature type="binding site" evidence="1">
    <location>
        <position position="37"/>
    </location>
    <ligand>
        <name>Mg(2+)</name>
        <dbReference type="ChEBI" id="CHEBI:18420"/>
    </ligand>
</feature>
<feature type="binding site" evidence="1">
    <location>
        <begin position="57"/>
        <end position="61"/>
    </location>
    <ligand>
        <name>GTP</name>
        <dbReference type="ChEBI" id="CHEBI:37565"/>
    </ligand>
</feature>
<feature type="binding site" evidence="1">
    <location>
        <position position="59"/>
    </location>
    <ligand>
        <name>Mg(2+)</name>
        <dbReference type="ChEBI" id="CHEBI:18420"/>
    </ligand>
</feature>
<feature type="binding site" evidence="1">
    <location>
        <begin position="75"/>
        <end position="78"/>
    </location>
    <ligand>
        <name>GTP</name>
        <dbReference type="ChEBI" id="CHEBI:37565"/>
    </ligand>
</feature>
<feature type="binding site" evidence="1">
    <location>
        <begin position="142"/>
        <end position="145"/>
    </location>
    <ligand>
        <name>GTP</name>
        <dbReference type="ChEBI" id="CHEBI:37565"/>
    </ligand>
</feature>
<feature type="binding site" evidence="1">
    <location>
        <begin position="177"/>
        <end position="179"/>
    </location>
    <ligand>
        <name>GTP</name>
        <dbReference type="ChEBI" id="CHEBI:37565"/>
    </ligand>
</feature>
<organism>
    <name type="scientific">Francisella tularensis subsp. holarctica (strain OSU18)</name>
    <dbReference type="NCBI Taxonomy" id="393011"/>
    <lineage>
        <taxon>Bacteria</taxon>
        <taxon>Pseudomonadati</taxon>
        <taxon>Pseudomonadota</taxon>
        <taxon>Gammaproteobacteria</taxon>
        <taxon>Thiotrichales</taxon>
        <taxon>Francisellaceae</taxon>
        <taxon>Francisella</taxon>
    </lineage>
</organism>
<name>ENGB_FRATO</name>
<sequence length="197" mass="22304">MNYSKAKYIMGAAKVSQLPEDTGVEVAFAGRSNAGKSSALNTLTDQKGLARVSKTPGRTQLINLFDLGNNNRLVDLPGYGYAKVSESIKRQWQSEMENYLTSRKCLNGIVLLVDSRHELKEFDSLMIEMAISFDLNLHILLTKADKLNNKERAQANRMIESFLKTFVSTDKISYQLFSSLTKMGLDKFKEKLDTWYQ</sequence>
<reference key="1">
    <citation type="journal article" date="2006" name="J. Bacteriol.">
        <title>Chromosome rearrangement and diversification of Francisella tularensis revealed by the type B (OSU18) genome sequence.</title>
        <authorList>
            <person name="Petrosino J.F."/>
            <person name="Xiang Q."/>
            <person name="Karpathy S.E."/>
            <person name="Jiang H."/>
            <person name="Yerrapragada S."/>
            <person name="Liu Y."/>
            <person name="Gioia J."/>
            <person name="Hemphill L."/>
            <person name="Gonzalez A."/>
            <person name="Raghavan T.M."/>
            <person name="Uzman A."/>
            <person name="Fox G.E."/>
            <person name="Highlander S."/>
            <person name="Reichard M."/>
            <person name="Morton R.J."/>
            <person name="Clinkenbeard K.D."/>
            <person name="Weinstock G.M."/>
        </authorList>
    </citation>
    <scope>NUCLEOTIDE SEQUENCE [LARGE SCALE GENOMIC DNA]</scope>
    <source>
        <strain>OSU18</strain>
    </source>
</reference>
<keyword id="KW-0131">Cell cycle</keyword>
<keyword id="KW-0132">Cell division</keyword>
<keyword id="KW-0342">GTP-binding</keyword>
<keyword id="KW-0460">Magnesium</keyword>
<keyword id="KW-0479">Metal-binding</keyword>
<keyword id="KW-0547">Nucleotide-binding</keyword>
<keyword id="KW-0717">Septation</keyword>
<dbReference type="EMBL" id="CP000437">
    <property type="protein sequence ID" value="ABI82803.1"/>
    <property type="molecule type" value="Genomic_DNA"/>
</dbReference>
<dbReference type="SMR" id="Q0BM81"/>
<dbReference type="KEGG" id="fth:FTH_0889"/>
<dbReference type="GO" id="GO:0005829">
    <property type="term" value="C:cytosol"/>
    <property type="evidence" value="ECO:0007669"/>
    <property type="project" value="TreeGrafter"/>
</dbReference>
<dbReference type="GO" id="GO:0005525">
    <property type="term" value="F:GTP binding"/>
    <property type="evidence" value="ECO:0007669"/>
    <property type="project" value="UniProtKB-UniRule"/>
</dbReference>
<dbReference type="GO" id="GO:0046872">
    <property type="term" value="F:metal ion binding"/>
    <property type="evidence" value="ECO:0007669"/>
    <property type="project" value="UniProtKB-KW"/>
</dbReference>
<dbReference type="GO" id="GO:0000917">
    <property type="term" value="P:division septum assembly"/>
    <property type="evidence" value="ECO:0007669"/>
    <property type="project" value="UniProtKB-KW"/>
</dbReference>
<dbReference type="CDD" id="cd01876">
    <property type="entry name" value="YihA_EngB"/>
    <property type="match status" value="1"/>
</dbReference>
<dbReference type="FunFam" id="3.40.50.300:FF:000098">
    <property type="entry name" value="Probable GTP-binding protein EngB"/>
    <property type="match status" value="1"/>
</dbReference>
<dbReference type="Gene3D" id="3.40.50.300">
    <property type="entry name" value="P-loop containing nucleotide triphosphate hydrolases"/>
    <property type="match status" value="1"/>
</dbReference>
<dbReference type="HAMAP" id="MF_00321">
    <property type="entry name" value="GTPase_EngB"/>
    <property type="match status" value="1"/>
</dbReference>
<dbReference type="InterPro" id="IPR030393">
    <property type="entry name" value="G_ENGB_dom"/>
</dbReference>
<dbReference type="InterPro" id="IPR006073">
    <property type="entry name" value="GTP-bd"/>
</dbReference>
<dbReference type="InterPro" id="IPR019987">
    <property type="entry name" value="GTP-bd_ribosome_bio_YsxC"/>
</dbReference>
<dbReference type="InterPro" id="IPR027417">
    <property type="entry name" value="P-loop_NTPase"/>
</dbReference>
<dbReference type="NCBIfam" id="TIGR03598">
    <property type="entry name" value="GTPase_YsxC"/>
    <property type="match status" value="1"/>
</dbReference>
<dbReference type="PANTHER" id="PTHR11649:SF13">
    <property type="entry name" value="ENGB-TYPE G DOMAIN-CONTAINING PROTEIN"/>
    <property type="match status" value="1"/>
</dbReference>
<dbReference type="PANTHER" id="PTHR11649">
    <property type="entry name" value="MSS1/TRME-RELATED GTP-BINDING PROTEIN"/>
    <property type="match status" value="1"/>
</dbReference>
<dbReference type="Pfam" id="PF01926">
    <property type="entry name" value="MMR_HSR1"/>
    <property type="match status" value="1"/>
</dbReference>
<dbReference type="SUPFAM" id="SSF52540">
    <property type="entry name" value="P-loop containing nucleoside triphosphate hydrolases"/>
    <property type="match status" value="1"/>
</dbReference>
<dbReference type="PROSITE" id="PS51706">
    <property type="entry name" value="G_ENGB"/>
    <property type="match status" value="1"/>
</dbReference>
<accession>Q0BM81</accession>
<protein>
    <recommendedName>
        <fullName evidence="1">Probable GTP-binding protein EngB</fullName>
    </recommendedName>
</protein>
<comment type="function">
    <text evidence="1">Necessary for normal cell division and for the maintenance of normal septation.</text>
</comment>
<comment type="cofactor">
    <cofactor evidence="1">
        <name>Mg(2+)</name>
        <dbReference type="ChEBI" id="CHEBI:18420"/>
    </cofactor>
</comment>
<comment type="similarity">
    <text evidence="1">Belongs to the TRAFAC class TrmE-Era-EngA-EngB-Septin-like GTPase superfamily. EngB GTPase family.</text>
</comment>
<evidence type="ECO:0000255" key="1">
    <source>
        <dbReference type="HAMAP-Rule" id="MF_00321"/>
    </source>
</evidence>